<name>PCD16_RAT</name>
<evidence type="ECO:0000250" key="1"/>
<evidence type="ECO:0000250" key="2">
    <source>
        <dbReference type="UniProtKB" id="E9PVD3"/>
    </source>
</evidence>
<evidence type="ECO:0000255" key="3"/>
<evidence type="ECO:0000255" key="4">
    <source>
        <dbReference type="PROSITE-ProRule" id="PRU00043"/>
    </source>
</evidence>
<evidence type="ECO:0000256" key="5">
    <source>
        <dbReference type="SAM" id="MobiDB-lite"/>
    </source>
</evidence>
<organism>
    <name type="scientific">Rattus norvegicus</name>
    <name type="common">Rat</name>
    <dbReference type="NCBI Taxonomy" id="10116"/>
    <lineage>
        <taxon>Eukaryota</taxon>
        <taxon>Metazoa</taxon>
        <taxon>Chordata</taxon>
        <taxon>Craniata</taxon>
        <taxon>Vertebrata</taxon>
        <taxon>Euteleostomi</taxon>
        <taxon>Mammalia</taxon>
        <taxon>Eutheria</taxon>
        <taxon>Euarchontoglires</taxon>
        <taxon>Glires</taxon>
        <taxon>Rodentia</taxon>
        <taxon>Myomorpha</taxon>
        <taxon>Muroidea</taxon>
        <taxon>Muridae</taxon>
        <taxon>Murinae</taxon>
        <taxon>Rattus</taxon>
    </lineage>
</organism>
<dbReference type="EMBL" id="AABR06007653">
    <property type="status" value="NOT_ANNOTATED_CDS"/>
    <property type="molecule type" value="Genomic_DNA"/>
</dbReference>
<dbReference type="RefSeq" id="NP_001101014.2">
    <property type="nucleotide sequence ID" value="NM_001107544.2"/>
</dbReference>
<dbReference type="RefSeq" id="XP_006230004.1">
    <property type="nucleotide sequence ID" value="XM_006229942.4"/>
</dbReference>
<dbReference type="RefSeq" id="XP_038934100.1">
    <property type="nucleotide sequence ID" value="XM_039078172.2"/>
</dbReference>
<dbReference type="SMR" id="D4ACX8"/>
<dbReference type="FunCoup" id="D4ACX8">
    <property type="interactions" value="279"/>
</dbReference>
<dbReference type="STRING" id="10116.ENSRNOP00000040147"/>
<dbReference type="GlyCosmos" id="D4ACX8">
    <property type="glycosylation" value="4 sites, No reported glycans"/>
</dbReference>
<dbReference type="GlyGen" id="D4ACX8">
    <property type="glycosylation" value="7 sites"/>
</dbReference>
<dbReference type="iPTMnet" id="D4ACX8"/>
<dbReference type="PhosphoSitePlus" id="D4ACX8"/>
<dbReference type="PaxDb" id="10116-ENSRNOP00000040147"/>
<dbReference type="PeptideAtlas" id="D4ACX8"/>
<dbReference type="Ensembl" id="ENSRNOT00000042865.6">
    <property type="protein sequence ID" value="ENSRNOP00000040147.4"/>
    <property type="gene ID" value="ENSRNOG00000031643.6"/>
</dbReference>
<dbReference type="GeneID" id="308912"/>
<dbReference type="KEGG" id="rno:308912"/>
<dbReference type="UCSC" id="RGD:1309878">
    <property type="organism name" value="rat"/>
</dbReference>
<dbReference type="AGR" id="RGD:1309878"/>
<dbReference type="CTD" id="8642"/>
<dbReference type="RGD" id="1309878">
    <property type="gene designation" value="Dchs1"/>
</dbReference>
<dbReference type="eggNOG" id="KOG3594">
    <property type="taxonomic scope" value="Eukaryota"/>
</dbReference>
<dbReference type="GeneTree" id="ENSGT00940000161822"/>
<dbReference type="HOGENOM" id="CLU_000265_2_0_1"/>
<dbReference type="InParanoid" id="D4ACX8"/>
<dbReference type="OMA" id="STCQIRI"/>
<dbReference type="OrthoDB" id="6252479at2759"/>
<dbReference type="TreeFam" id="TF316403"/>
<dbReference type="PRO" id="PR:D4ACX8"/>
<dbReference type="Proteomes" id="UP000002494">
    <property type="component" value="Chromosome 1"/>
</dbReference>
<dbReference type="Bgee" id="ENSRNOG00000031643">
    <property type="expression patterns" value="Expressed in heart and 17 other cell types or tissues"/>
</dbReference>
<dbReference type="GO" id="GO:0045177">
    <property type="term" value="C:apical part of cell"/>
    <property type="evidence" value="ECO:0000266"/>
    <property type="project" value="RGD"/>
</dbReference>
<dbReference type="GO" id="GO:0016342">
    <property type="term" value="C:catenin complex"/>
    <property type="evidence" value="ECO:0000318"/>
    <property type="project" value="GO_Central"/>
</dbReference>
<dbReference type="GO" id="GO:0008013">
    <property type="term" value="F:beta-catenin binding"/>
    <property type="evidence" value="ECO:0000318"/>
    <property type="project" value="GO_Central"/>
</dbReference>
<dbReference type="GO" id="GO:0045296">
    <property type="term" value="F:cadherin binding"/>
    <property type="evidence" value="ECO:0000318"/>
    <property type="project" value="GO_Central"/>
</dbReference>
<dbReference type="GO" id="GO:0005509">
    <property type="term" value="F:calcium ion binding"/>
    <property type="evidence" value="ECO:0007669"/>
    <property type="project" value="InterPro"/>
</dbReference>
<dbReference type="GO" id="GO:0009653">
    <property type="term" value="P:anatomical structure morphogenesis"/>
    <property type="evidence" value="ECO:0000266"/>
    <property type="project" value="RGD"/>
</dbReference>
<dbReference type="GO" id="GO:0001658">
    <property type="term" value="P:branching involved in ureteric bud morphogenesis"/>
    <property type="evidence" value="ECO:0000266"/>
    <property type="project" value="RGD"/>
</dbReference>
<dbReference type="GO" id="GO:0016477">
    <property type="term" value="P:cell migration"/>
    <property type="evidence" value="ECO:0000266"/>
    <property type="project" value="RGD"/>
</dbReference>
<dbReference type="GO" id="GO:0003273">
    <property type="term" value="P:cell migration involved in endocardial cushion formation"/>
    <property type="evidence" value="ECO:0000266"/>
    <property type="project" value="RGD"/>
</dbReference>
<dbReference type="GO" id="GO:0098609">
    <property type="term" value="P:cell-cell adhesion"/>
    <property type="evidence" value="ECO:0000266"/>
    <property type="project" value="RGD"/>
</dbReference>
<dbReference type="GO" id="GO:0098742">
    <property type="term" value="P:cell-cell adhesion via plasma-membrane adhesion molecules"/>
    <property type="evidence" value="ECO:0000318"/>
    <property type="project" value="GO_Central"/>
</dbReference>
<dbReference type="GO" id="GO:0090102">
    <property type="term" value="P:cochlea development"/>
    <property type="evidence" value="ECO:0000266"/>
    <property type="project" value="RGD"/>
</dbReference>
<dbReference type="GO" id="GO:0072137">
    <property type="term" value="P:condensed mesenchymal cell proliferation"/>
    <property type="evidence" value="ECO:0000266"/>
    <property type="project" value="RGD"/>
</dbReference>
<dbReference type="GO" id="GO:0048565">
    <property type="term" value="P:digestive tract development"/>
    <property type="evidence" value="ECO:0000266"/>
    <property type="project" value="RGD"/>
</dbReference>
<dbReference type="GO" id="GO:0010467">
    <property type="term" value="P:gene expression"/>
    <property type="evidence" value="ECO:0007669"/>
    <property type="project" value="Ensembl"/>
</dbReference>
<dbReference type="GO" id="GO:0003007">
    <property type="term" value="P:heart morphogenesis"/>
    <property type="evidence" value="ECO:0000266"/>
    <property type="project" value="RGD"/>
</dbReference>
<dbReference type="GO" id="GO:0007157">
    <property type="term" value="P:heterophilic cell-cell adhesion via plasma membrane cell adhesion molecules"/>
    <property type="evidence" value="ECO:0000250"/>
    <property type="project" value="UniProtKB"/>
</dbReference>
<dbReference type="GO" id="GO:0035329">
    <property type="term" value="P:hippo signaling"/>
    <property type="evidence" value="ECO:0000250"/>
    <property type="project" value="UniProtKB"/>
</dbReference>
<dbReference type="GO" id="GO:0007156">
    <property type="term" value="P:homophilic cell adhesion via plasma membrane adhesion molecules"/>
    <property type="evidence" value="ECO:0007669"/>
    <property type="project" value="InterPro"/>
</dbReference>
<dbReference type="GO" id="GO:0001822">
    <property type="term" value="P:kidney development"/>
    <property type="evidence" value="ECO:0000266"/>
    <property type="project" value="RGD"/>
</dbReference>
<dbReference type="GO" id="GO:0003192">
    <property type="term" value="P:mitral valve formation"/>
    <property type="evidence" value="ECO:0000266"/>
    <property type="project" value="RGD"/>
</dbReference>
<dbReference type="GO" id="GO:0003183">
    <property type="term" value="P:mitral valve morphogenesis"/>
    <property type="evidence" value="ECO:0000266"/>
    <property type="project" value="RGD"/>
</dbReference>
<dbReference type="GO" id="GO:0072006">
    <property type="term" value="P:nephron development"/>
    <property type="evidence" value="ECO:0000266"/>
    <property type="project" value="RGD"/>
</dbReference>
<dbReference type="GO" id="GO:0021915">
    <property type="term" value="P:neural tube development"/>
    <property type="evidence" value="ECO:0000266"/>
    <property type="project" value="RGD"/>
</dbReference>
<dbReference type="GO" id="GO:0022008">
    <property type="term" value="P:neurogenesis"/>
    <property type="evidence" value="ECO:0000250"/>
    <property type="project" value="UniProtKB"/>
</dbReference>
<dbReference type="GO" id="GO:0043931">
    <property type="term" value="P:ossification involved in bone maturation"/>
    <property type="evidence" value="ECO:0000266"/>
    <property type="project" value="RGD"/>
</dbReference>
<dbReference type="GO" id="GO:0007389">
    <property type="term" value="P:pattern specification process"/>
    <property type="evidence" value="ECO:0000266"/>
    <property type="project" value="RGD"/>
</dbReference>
<dbReference type="GO" id="GO:0036342">
    <property type="term" value="P:post-anal tail morphogenesis"/>
    <property type="evidence" value="ECO:0000266"/>
    <property type="project" value="RGD"/>
</dbReference>
<dbReference type="GO" id="GO:0072659">
    <property type="term" value="P:protein localization to plasma membrane"/>
    <property type="evidence" value="ECO:0000266"/>
    <property type="project" value="RGD"/>
</dbReference>
<dbReference type="GO" id="GO:0032185">
    <property type="term" value="P:septin cytoskeleton organization"/>
    <property type="evidence" value="ECO:0007669"/>
    <property type="project" value="Ensembl"/>
</dbReference>
<dbReference type="CDD" id="cd11304">
    <property type="entry name" value="Cadherin_repeat"/>
    <property type="match status" value="26"/>
</dbReference>
<dbReference type="FunFam" id="2.60.40.60:FF:000104">
    <property type="entry name" value="cadherin-23 isoform X1"/>
    <property type="match status" value="1"/>
</dbReference>
<dbReference type="FunFam" id="2.60.40.60:FF:000140">
    <property type="entry name" value="Dachsous cadherin-related 1"/>
    <property type="match status" value="1"/>
</dbReference>
<dbReference type="FunFam" id="2.60.40.60:FF:000150">
    <property type="entry name" value="Dachsous cadherin-related 1"/>
    <property type="match status" value="1"/>
</dbReference>
<dbReference type="FunFam" id="2.60.40.60:FF:000158">
    <property type="entry name" value="Dachsous cadherin-related 1"/>
    <property type="match status" value="1"/>
</dbReference>
<dbReference type="FunFam" id="2.60.40.60:FF:000201">
    <property type="entry name" value="Dachsous cadherin-related 1"/>
    <property type="match status" value="1"/>
</dbReference>
<dbReference type="FunFam" id="2.60.40.60:FF:000214">
    <property type="entry name" value="Dachsous cadherin-related 1"/>
    <property type="match status" value="1"/>
</dbReference>
<dbReference type="FunFam" id="2.60.40.60:FF:000225">
    <property type="entry name" value="Dachsous cadherin-related 1"/>
    <property type="match status" value="1"/>
</dbReference>
<dbReference type="FunFam" id="2.60.40.60:FF:000235">
    <property type="entry name" value="Dachsous cadherin-related 1"/>
    <property type="match status" value="1"/>
</dbReference>
<dbReference type="FunFam" id="2.60.40.60:FF:000254">
    <property type="entry name" value="Dachsous cadherin-related 1"/>
    <property type="match status" value="1"/>
</dbReference>
<dbReference type="FunFam" id="2.60.40.60:FF:000020">
    <property type="entry name" value="Dachsous cadherin-related 1b"/>
    <property type="match status" value="11"/>
</dbReference>
<dbReference type="FunFam" id="2.60.40.60:FF:000102">
    <property type="entry name" value="Dachsous cadherin-related 1b"/>
    <property type="match status" value="1"/>
</dbReference>
<dbReference type="FunFam" id="2.60.40.60:FF:000153">
    <property type="entry name" value="Dachsous cadherin-related 2"/>
    <property type="match status" value="1"/>
</dbReference>
<dbReference type="FunFam" id="2.60.40.60:FF:000007">
    <property type="entry name" value="Protocadherin alpha 2"/>
    <property type="match status" value="1"/>
</dbReference>
<dbReference type="FunFam" id="2.60.40.60:FF:000035">
    <property type="entry name" value="Protocadherin Fat 3"/>
    <property type="match status" value="2"/>
</dbReference>
<dbReference type="FunFam" id="2.60.40.60:FF:000081">
    <property type="entry name" value="protocadherin Fat 4"/>
    <property type="match status" value="1"/>
</dbReference>
<dbReference type="FunFam" id="2.60.40.60:FF:000060">
    <property type="entry name" value="Putative cadherin-23"/>
    <property type="match status" value="1"/>
</dbReference>
<dbReference type="Gene3D" id="2.60.40.60">
    <property type="entry name" value="Cadherins"/>
    <property type="match status" value="27"/>
</dbReference>
<dbReference type="InterPro" id="IPR050971">
    <property type="entry name" value="Cadherin-domain_protein"/>
</dbReference>
<dbReference type="InterPro" id="IPR002126">
    <property type="entry name" value="Cadherin-like_dom"/>
</dbReference>
<dbReference type="InterPro" id="IPR015919">
    <property type="entry name" value="Cadherin-like_sf"/>
</dbReference>
<dbReference type="InterPro" id="IPR020894">
    <property type="entry name" value="Cadherin_CS"/>
</dbReference>
<dbReference type="PANTHER" id="PTHR24025:SF22">
    <property type="entry name" value="CADHERIN DOMAIN-CONTAINING PROTEIN"/>
    <property type="match status" value="1"/>
</dbReference>
<dbReference type="PANTHER" id="PTHR24025">
    <property type="entry name" value="DESMOGLEIN FAMILY MEMBER"/>
    <property type="match status" value="1"/>
</dbReference>
<dbReference type="Pfam" id="PF00028">
    <property type="entry name" value="Cadherin"/>
    <property type="match status" value="23"/>
</dbReference>
<dbReference type="PRINTS" id="PR00205">
    <property type="entry name" value="CADHERIN"/>
</dbReference>
<dbReference type="SMART" id="SM00112">
    <property type="entry name" value="CA"/>
    <property type="match status" value="27"/>
</dbReference>
<dbReference type="SUPFAM" id="SSF49313">
    <property type="entry name" value="Cadherin-like"/>
    <property type="match status" value="27"/>
</dbReference>
<dbReference type="PROSITE" id="PS00232">
    <property type="entry name" value="CADHERIN_1"/>
    <property type="match status" value="18"/>
</dbReference>
<dbReference type="PROSITE" id="PS50268">
    <property type="entry name" value="CADHERIN_2"/>
    <property type="match status" value="27"/>
</dbReference>
<comment type="function">
    <text evidence="1">Calcium-dependent cell-adhesion protein. Mediates functions in neuroprogenitor cell proliferation and differentiation (By similarity).</text>
</comment>
<comment type="subunit">
    <text evidence="1">Heterophilic interaction with FAT4; this interaction affects their respective protein levels.</text>
</comment>
<comment type="subcellular location">
    <subcellularLocation>
        <location evidence="1">Cell membrane</location>
        <topology evidence="1">Single-pass type I membrane protein</topology>
    </subcellularLocation>
    <text>In the embryonic cortex, FAT4 and DCHS1 accumulated at the cell-cell boundaries located apical to the adherens junction.</text>
</comment>
<reference key="1">
    <citation type="journal article" date="2004" name="Nature">
        <title>Genome sequence of the Brown Norway rat yields insights into mammalian evolution.</title>
        <authorList>
            <person name="Gibbs R.A."/>
            <person name="Weinstock G.M."/>
            <person name="Metzker M.L."/>
            <person name="Muzny D.M."/>
            <person name="Sodergren E.J."/>
            <person name="Scherer S."/>
            <person name="Scott G."/>
            <person name="Steffen D."/>
            <person name="Worley K.C."/>
            <person name="Burch P.E."/>
            <person name="Okwuonu G."/>
            <person name="Hines S."/>
            <person name="Lewis L."/>
            <person name="Deramo C."/>
            <person name="Delgado O."/>
            <person name="Dugan-Rocha S."/>
            <person name="Miner G."/>
            <person name="Morgan M."/>
            <person name="Hawes A."/>
            <person name="Gill R."/>
            <person name="Holt R.A."/>
            <person name="Adams M.D."/>
            <person name="Amanatides P.G."/>
            <person name="Baden-Tillson H."/>
            <person name="Barnstead M."/>
            <person name="Chin S."/>
            <person name="Evans C.A."/>
            <person name="Ferriera S."/>
            <person name="Fosler C."/>
            <person name="Glodek A."/>
            <person name="Gu Z."/>
            <person name="Jennings D."/>
            <person name="Kraft C.L."/>
            <person name="Nguyen T."/>
            <person name="Pfannkoch C.M."/>
            <person name="Sitter C."/>
            <person name="Sutton G.G."/>
            <person name="Venter J.C."/>
            <person name="Woodage T."/>
            <person name="Smith D."/>
            <person name="Lee H.-M."/>
            <person name="Gustafson E."/>
            <person name="Cahill P."/>
            <person name="Kana A."/>
            <person name="Doucette-Stamm L."/>
            <person name="Weinstock K."/>
            <person name="Fechtel K."/>
            <person name="Weiss R.B."/>
            <person name="Dunn D.M."/>
            <person name="Green E.D."/>
            <person name="Blakesley R.W."/>
            <person name="Bouffard G.G."/>
            <person name="De Jong P.J."/>
            <person name="Osoegawa K."/>
            <person name="Zhu B."/>
            <person name="Marra M."/>
            <person name="Schein J."/>
            <person name="Bosdet I."/>
            <person name="Fjell C."/>
            <person name="Jones S."/>
            <person name="Krzywinski M."/>
            <person name="Mathewson C."/>
            <person name="Siddiqui A."/>
            <person name="Wye N."/>
            <person name="McPherson J."/>
            <person name="Zhao S."/>
            <person name="Fraser C.M."/>
            <person name="Shetty J."/>
            <person name="Shatsman S."/>
            <person name="Geer K."/>
            <person name="Chen Y."/>
            <person name="Abramzon S."/>
            <person name="Nierman W.C."/>
            <person name="Havlak P.H."/>
            <person name="Chen R."/>
            <person name="Durbin K.J."/>
            <person name="Egan A."/>
            <person name="Ren Y."/>
            <person name="Song X.-Z."/>
            <person name="Li B."/>
            <person name="Liu Y."/>
            <person name="Qin X."/>
            <person name="Cawley S."/>
            <person name="Cooney A.J."/>
            <person name="D'Souza L.M."/>
            <person name="Martin K."/>
            <person name="Wu J.Q."/>
            <person name="Gonzalez-Garay M.L."/>
            <person name="Jackson A.R."/>
            <person name="Kalafus K.J."/>
            <person name="McLeod M.P."/>
            <person name="Milosavljevic A."/>
            <person name="Virk D."/>
            <person name="Volkov A."/>
            <person name="Wheeler D.A."/>
            <person name="Zhang Z."/>
            <person name="Bailey J.A."/>
            <person name="Eichler E.E."/>
            <person name="Tuzun E."/>
            <person name="Birney E."/>
            <person name="Mongin E."/>
            <person name="Ureta-Vidal A."/>
            <person name="Woodwark C."/>
            <person name="Zdobnov E."/>
            <person name="Bork P."/>
            <person name="Suyama M."/>
            <person name="Torrents D."/>
            <person name="Alexandersson M."/>
            <person name="Trask B.J."/>
            <person name="Young J.M."/>
            <person name="Huang H."/>
            <person name="Wang H."/>
            <person name="Xing H."/>
            <person name="Daniels S."/>
            <person name="Gietzen D."/>
            <person name="Schmidt J."/>
            <person name="Stevens K."/>
            <person name="Vitt U."/>
            <person name="Wingrove J."/>
            <person name="Camara F."/>
            <person name="Mar Alba M."/>
            <person name="Abril J.F."/>
            <person name="Guigo R."/>
            <person name="Smit A."/>
            <person name="Dubchak I."/>
            <person name="Rubin E.M."/>
            <person name="Couronne O."/>
            <person name="Poliakov A."/>
            <person name="Huebner N."/>
            <person name="Ganten D."/>
            <person name="Goesele C."/>
            <person name="Hummel O."/>
            <person name="Kreitler T."/>
            <person name="Lee Y.-A."/>
            <person name="Monti J."/>
            <person name="Schulz H."/>
            <person name="Zimdahl H."/>
            <person name="Himmelbauer H."/>
            <person name="Lehrach H."/>
            <person name="Jacob H.J."/>
            <person name="Bromberg S."/>
            <person name="Gullings-Handley J."/>
            <person name="Jensen-Seaman M.I."/>
            <person name="Kwitek A.E."/>
            <person name="Lazar J."/>
            <person name="Pasko D."/>
            <person name="Tonellato P.J."/>
            <person name="Twigger S."/>
            <person name="Ponting C.P."/>
            <person name="Duarte J.M."/>
            <person name="Rice S."/>
            <person name="Goodstadt L."/>
            <person name="Beatson S.A."/>
            <person name="Emes R.D."/>
            <person name="Winter E.E."/>
            <person name="Webber C."/>
            <person name="Brandt P."/>
            <person name="Nyakatura G."/>
            <person name="Adetobi M."/>
            <person name="Chiaromonte F."/>
            <person name="Elnitski L."/>
            <person name="Eswara P."/>
            <person name="Hardison R.C."/>
            <person name="Hou M."/>
            <person name="Kolbe D."/>
            <person name="Makova K."/>
            <person name="Miller W."/>
            <person name="Nekrutenko A."/>
            <person name="Riemer C."/>
            <person name="Schwartz S."/>
            <person name="Taylor J."/>
            <person name="Yang S."/>
            <person name="Zhang Y."/>
            <person name="Lindpaintner K."/>
            <person name="Andrews T.D."/>
            <person name="Caccamo M."/>
            <person name="Clamp M."/>
            <person name="Clarke L."/>
            <person name="Curwen V."/>
            <person name="Durbin R.M."/>
            <person name="Eyras E."/>
            <person name="Searle S.M."/>
            <person name="Cooper G.M."/>
            <person name="Batzoglou S."/>
            <person name="Brudno M."/>
            <person name="Sidow A."/>
            <person name="Stone E.A."/>
            <person name="Payseur B.A."/>
            <person name="Bourque G."/>
            <person name="Lopez-Otin C."/>
            <person name="Puente X.S."/>
            <person name="Chakrabarti K."/>
            <person name="Chatterji S."/>
            <person name="Dewey C."/>
            <person name="Pachter L."/>
            <person name="Bray N."/>
            <person name="Yap V.B."/>
            <person name="Caspi A."/>
            <person name="Tesler G."/>
            <person name="Pevzner P.A."/>
            <person name="Haussler D."/>
            <person name="Roskin K.M."/>
            <person name="Baertsch R."/>
            <person name="Clawson H."/>
            <person name="Furey T.S."/>
            <person name="Hinrichs A.S."/>
            <person name="Karolchik D."/>
            <person name="Kent W.J."/>
            <person name="Rosenbloom K.R."/>
            <person name="Trumbower H."/>
            <person name="Weirauch M."/>
            <person name="Cooper D.N."/>
            <person name="Stenson P.D."/>
            <person name="Ma B."/>
            <person name="Brent M."/>
            <person name="Arumugam M."/>
            <person name="Shteynberg D."/>
            <person name="Copley R.R."/>
            <person name="Taylor M.S."/>
            <person name="Riethman H."/>
            <person name="Mudunuri U."/>
            <person name="Peterson J."/>
            <person name="Guyer M."/>
            <person name="Felsenfeld A."/>
            <person name="Old S."/>
            <person name="Mockrin S."/>
            <person name="Collins F.S."/>
        </authorList>
    </citation>
    <scope>NUCLEOTIDE SEQUENCE [LARGE SCALE GENOMIC DNA]</scope>
    <source>
        <strain>Brown Norway</strain>
    </source>
</reference>
<gene>
    <name type="primary">Dchs1</name>
</gene>
<accession>D4ACX8</accession>
<sequence length="3291" mass="345981">MQEELSVALSCPGMKSLGTLLPLLVLLGTTVPGIRGQAGSLDLQIDEEQPAGTLIGDISAGLPPGTAPPPMYFISAQEGSGVGTDLDIDEHSGVVCTARVLDRERRDRYRFTAVTPDGATVEVTVRVADINDHAPAFPQARAALQIPEHTALGTRYPLEPAHDADAGRLGTQGYALSGDGAGETFRLETRPGPGGAPVPELVIAGELDRENRSHYMLQLEAYDGGSPPRRAQALLDVTLLDINDHAPAFNQSRYHAVVSESLAPGSPVLQVFASDADAGANGAVTYEINRRQSEGDGPFSIDAHTGFLKLERPLDFEQRRVHELVVQARDGGAHPELGSAFVTVHVRDANDNQPSMTVIFLSADGSPRVSEAAPPGQLVARISVSDPDDGDFAHVNVSLEGGEGHFALSTQDSVIYLVCVARRLDREERDVYNLRVTATDSGSPPLRAEAAFVLHVTDVNDNAPAFDRQLYRPEPLPEVALPGSFVVRVTARDPDQGTNGQVTYSLAPGTHTHWFSIDPTSGIITTAATLDYELEPQPQLIVVATDGGLPPLVSSATVSVALQDVNDNEPQFQRTFYNASLPEGTQPGTCFLQVTATDADSGPFGLLSYSLGAGLGASGSPPFRIDAHSGEVCTTRILDRDQGPSSFDFTVTAIDGGGLKSMVYVKVFVADENDNPPQFYPREYAASLSAQSTPGTAVLRVHAHDPDQGPHGRLSYHILAGNSPPLFALDAHSGLLTVAWPLGRRANSVVQLEIGAQDGGGLQAEPIARVNISIVPGTPTPPIFEQLQYVFSVPEDVAPGTSVGVVQAHNPPGRLGPVTLTLSGGDPRGLFSLDSASGLLKTLRPLDRELLGPVLELEVRAGSGTPPVFSAARIRVLLDDVNDNSPAFPAPEDTVLLPQNTAPGTPVYTLRALDPDSGANSRVTFSLLAGGDGLFTVDPTTGHVRLMGPLGPPGGPPHELEVEAQDGGSPPRTSHFRLRVVIQDLGIHGLAPRFDSPTYRVDLPSGTTTGTQILQVQAQAPDGSPVTYHLAADGASNPFGLESQSGWLWVRAALDRESQELYTLKVMAVSGSKAELGQQTGTATVRVVILNQNDHSPRLSEEPTFLAVAENQPPGTSVGRVFATDKDSGPNGRLTYSLQQLSEDSKAFRIHPQTGEVTTLQTLDREQQSSFQLLVQVQDAGSPPRSATGTVHVAVLDLNDNSPTFLQASGAAGGGLPIQVPDRVPPGTLVTTLQAKDPDEGENGTILYTLTGSGSELFSLHPHTGELHTAASLIRAERPHYVLTLSAHDQGSPPRSASLQLLVQVLPSTRMVESPDLVEADSAATVPVVLTVTAAEGLRPGSLLGSVAPQEPASMGVLTYTLVGGADPEGTFALDSASGRLYLARVLDFESGPAWRALTVRAEGPGGAGARLMRVQVRVQDENEHAPAFARDPLALALPENPEPGATLYTFRASDADGPGPNSDVRYRLLRQEPPVPALRLDARTGALSAPRGLDRETTPALLLIVEATDRPANASRRKATRVSARVFVTDENDNAPVFASPSRMRLPEDQPPGPAALHVVARDPDLGEAARVSYRLAAGGDGHFRLHATTGALSVVRPLDREQRAEHVLTVVASDHGSPPRSSTQLLTVSVVDVNDEAPAFPQQEYNVILRENSPPGTSLLTLKATDPDLGANGQVTYGGVSGESFSLDPNSGVLTTLRALDREEQEEINLTVYARDRGLPPLLTHITVRVTVEDENDHSPTFGNTHLSLEVPEGQDPQTLTTLRASDPDGGLNGQLQYRILGGDPSGAFALDLTSGEFGTTRPLDREVEPAFQLQIEARDGGQPALSATLLVTVTVLDANDHAPAFPVPSYSVEVPEDAPVGTLLLQLQAHDPDEGDNGRVMYYLGAGTAGAFLLEPTSGELSTATALDREHCASYAFSVTAVDGAAAGPLSTTVPITVTVRDVNDHAPAFPTSPLRLRLPRPGPSLNKPTLALATLRAEDRDAGANASILYRLAGTPPPGTTVDSYTGEIRVARSPAALGPRDRVLFIVATDLGRPARSATGVVIVGIQGEPERGPRFPRANNEAVLRENAPPGTPVISPKAVHSGGSNGPITYSILSGNERGIFSIQPSTGTITVQSAEGLDFETNPRLRLVLQAESGGAFAFSVLTLTLQDANDNAPRFLQPHYVAFLPESRPLEGPLLQVEADDLDQGSGGQISYSLAASQPARGLFHVDPATGTITTTAILDREIWAETRLVLMATDRGSPALVGSATLTVMVIDTNDNRPTIPQPWELRVSEDALLGSEIAQVTGNDVDSGPVLWYVLSPSGPQDPFSIGRYGGRVSLTGPLDFEQCDHYHLQLLAHDGPHEGHANLTVLVEDVNDNVPIFSQSLYQVMMLEHTPPGSAILSVSATDRDSGANGHISYHLASPAEGFSVDTNNGTLFTTVGAMALGHEGPGVVDVVLEARDHGAPGRSAQATVHVQLKDQNDHAPSFTLPHYRVAVSEDLPPGSTLLTLEAIDADGSRSHATVDYSIISGNRGRVFQLEPRLAEVGDGVGPGPQALGCLVLLEPLDFESLTQYNLTVTAADRGQPPRSSAVPVTVTVLDVNDNPPVFTRASYRVTVPEDMPVGAELLHVEASDADPGPHGLVHFTLSSGDPLGLFELDENSGALRLAHPLDCETQAQHQLVVQAADPAGTHFALVPVTVEVQDVNDHGPAFPLSLLSTSLAENQPPGTLVTTLHAMDGDAGTFGRLRYTLLEAVPGPEGREAFSLNSSTGELRARVPFDYEHTGSFRLLVGAADAGNLSASVTVSVLITGEDEYDPVFLAPSFHFQVPEGAQRGHSLGHVQATDEDGGADGLVLYSLATSSPYFGINQTTGALYLRVDSRAPGSGTATSGGGGRTRREAPRELRLEVVARGPLPGSRSATVPVTVDITHTALGLAPDLNLLLVGAVAASLGVVVVLALAALVLGLVRARSRKAEAAPGPMSQTAPIASSSLQKLGREPPSPPPSEHLYHQTLPSYGGPGAGGPYPRGGSLDPSHSSGRGSAEAAEDDEIRMINEFPRVASVASSLAARGPDSGIQQDADGLSDTSCEPPAPDTWYKGRKAGLLLPGAGATLYREEGPPATATAFLGGCGLSPAPTGDYGFPADGKPCVAGALTAIVAGEEELRGSYNWDYLLSWCPQFQPLASVFTEIARLKDEARPCPPAPRIDPPPLITAVAHPGAKSVPPKPASTAATRAIFPPASHRSPISHEGSLSSAAMSPSFSPSLSPLAARSPVVSPFGVAQGPSASALSTESGLEPPDDTELRI</sequence>
<protein>
    <recommendedName>
        <fullName>Protocadherin-16</fullName>
    </recommendedName>
    <alternativeName>
        <fullName>Protein dachsous homolog 1</fullName>
    </alternativeName>
</protein>
<feature type="signal peptide" evidence="3">
    <location>
        <begin position="1"/>
        <end position="35"/>
    </location>
</feature>
<feature type="chain" id="PRO_0000429046" description="Protocadherin-16">
    <location>
        <begin position="36"/>
        <end position="3291"/>
    </location>
</feature>
<feature type="topological domain" description="Extracellular" evidence="3">
    <location>
        <begin position="36"/>
        <end position="2933"/>
    </location>
</feature>
<feature type="transmembrane region" description="Helical" evidence="3">
    <location>
        <begin position="2934"/>
        <end position="2954"/>
    </location>
</feature>
<feature type="topological domain" description="Cytoplasmic" evidence="3">
    <location>
        <begin position="2955"/>
        <end position="3291"/>
    </location>
</feature>
<feature type="domain" description="Cadherin 1" evidence="4">
    <location>
        <begin position="37"/>
        <end position="137"/>
    </location>
</feature>
<feature type="domain" description="Cadherin 2" evidence="4">
    <location>
        <begin position="138"/>
        <end position="249"/>
    </location>
</feature>
<feature type="domain" description="Cadherin 3" evidence="4">
    <location>
        <begin position="250"/>
        <end position="356"/>
    </location>
</feature>
<feature type="domain" description="Cadherin 4" evidence="4">
    <location>
        <begin position="369"/>
        <end position="466"/>
    </location>
</feature>
<feature type="domain" description="Cadherin 5" evidence="4">
    <location>
        <begin position="476"/>
        <end position="572"/>
    </location>
</feature>
<feature type="domain" description="Cadherin 6" evidence="4">
    <location>
        <begin position="573"/>
        <end position="679"/>
    </location>
</feature>
<feature type="domain" description="Cadherin 7" evidence="4">
    <location>
        <begin position="680"/>
        <end position="784"/>
    </location>
</feature>
<feature type="domain" description="Cadherin 8" evidence="4">
    <location>
        <begin position="785"/>
        <end position="888"/>
    </location>
</feature>
<feature type="domain" description="Cadherin 9" evidence="4">
    <location>
        <begin position="889"/>
        <end position="994"/>
    </location>
</feature>
<feature type="domain" description="Cadherin 10" evidence="4">
    <location>
        <begin position="995"/>
        <end position="1105"/>
    </location>
</feature>
<feature type="domain" description="Cadherin 11" evidence="4">
    <location>
        <begin position="1100"/>
        <end position="1205"/>
    </location>
</feature>
<feature type="domain" description="Cadherin 12" evidence="4">
    <location>
        <begin position="1218"/>
        <end position="1317"/>
    </location>
</feature>
<feature type="domain" description="Cadherin 13" evidence="4">
    <location>
        <begin position="1326"/>
        <end position="1429"/>
    </location>
</feature>
<feature type="domain" description="Cadherin 14" evidence="4">
    <location>
        <begin position="1430"/>
        <end position="1539"/>
    </location>
</feature>
<feature type="domain" description="Cadherin 15" evidence="4">
    <location>
        <begin position="1539"/>
        <end position="1642"/>
    </location>
</feature>
<feature type="domain" description="Cadherin 16" evidence="4">
    <location>
        <begin position="1643"/>
        <end position="1744"/>
    </location>
</feature>
<feature type="domain" description="Cadherin 17" evidence="4">
    <location>
        <begin position="1745"/>
        <end position="1848"/>
    </location>
</feature>
<feature type="domain" description="Cadherin 18" evidence="4">
    <location>
        <begin position="1849"/>
        <end position="1953"/>
    </location>
</feature>
<feature type="domain" description="Cadherin 19" evidence="4">
    <location>
        <begin position="1976"/>
        <end position="2061"/>
    </location>
</feature>
<feature type="domain" description="Cadherin 20" evidence="4">
    <location>
        <begin position="2062"/>
        <end position="2164"/>
    </location>
</feature>
<feature type="domain" description="Cadherin 21" evidence="4">
    <location>
        <begin position="2165"/>
        <end position="2270"/>
    </location>
</feature>
<feature type="domain" description="Cadherin 22" evidence="4">
    <location>
        <begin position="2270"/>
        <end position="2369"/>
    </location>
</feature>
<feature type="domain" description="Cadherin 23" evidence="4">
    <location>
        <begin position="2370"/>
        <end position="2475"/>
    </location>
</feature>
<feature type="domain" description="Cadherin 24" evidence="4">
    <location>
        <begin position="2476"/>
        <end position="2595"/>
    </location>
</feature>
<feature type="domain" description="Cadherin 25" evidence="4">
    <location>
        <begin position="2596"/>
        <end position="2699"/>
    </location>
</feature>
<feature type="domain" description="Cadherin 26" evidence="4">
    <location>
        <begin position="2700"/>
        <end position="2806"/>
    </location>
</feature>
<feature type="domain" description="Cadherin 27" evidence="4">
    <location>
        <begin position="2807"/>
        <end position="2926"/>
    </location>
</feature>
<feature type="region of interest" description="Disordered" evidence="5">
    <location>
        <begin position="951"/>
        <end position="971"/>
    </location>
</feature>
<feature type="region of interest" description="Disordered" evidence="5">
    <location>
        <begin position="2978"/>
        <end position="3033"/>
    </location>
</feature>
<feature type="region of interest" description="Disordered" evidence="5">
    <location>
        <begin position="3051"/>
        <end position="3080"/>
    </location>
</feature>
<feature type="region of interest" description="Disordered" evidence="5">
    <location>
        <begin position="3226"/>
        <end position="3291"/>
    </location>
</feature>
<feature type="compositionally biased region" description="Gly residues" evidence="5">
    <location>
        <begin position="3004"/>
        <end position="3013"/>
    </location>
</feature>
<feature type="compositionally biased region" description="Low complexity" evidence="5">
    <location>
        <begin position="3237"/>
        <end position="3259"/>
    </location>
</feature>
<feature type="compositionally biased region" description="Polar residues" evidence="5">
    <location>
        <begin position="3270"/>
        <end position="3279"/>
    </location>
</feature>
<feature type="modified residue" description="Phosphoserine" evidence="2">
    <location>
        <position position="3048"/>
    </location>
</feature>
<feature type="glycosylation site" description="N-linked (GlcNAc...) asparagine" evidence="3">
    <location>
        <position position="396"/>
    </location>
</feature>
<feature type="glycosylation site" description="N-linked (GlcNAc...) asparagine" evidence="3">
    <location>
        <position position="1711"/>
    </location>
</feature>
<feature type="glycosylation site" description="N-linked (GlcNAc...) asparagine" evidence="3">
    <location>
        <position position="2354"/>
    </location>
</feature>
<feature type="glycosylation site" description="N-linked (GlcNAc...) asparagine" evidence="3">
    <location>
        <position position="2562"/>
    </location>
</feature>
<proteinExistence type="inferred from homology"/>
<keyword id="KW-0106">Calcium</keyword>
<keyword id="KW-0130">Cell adhesion</keyword>
<keyword id="KW-1003">Cell membrane</keyword>
<keyword id="KW-0325">Glycoprotein</keyword>
<keyword id="KW-0472">Membrane</keyword>
<keyword id="KW-0597">Phosphoprotein</keyword>
<keyword id="KW-1185">Reference proteome</keyword>
<keyword id="KW-0677">Repeat</keyword>
<keyword id="KW-0732">Signal</keyword>
<keyword id="KW-0812">Transmembrane</keyword>
<keyword id="KW-1133">Transmembrane helix</keyword>